<evidence type="ECO:0000255" key="1">
    <source>
        <dbReference type="HAMAP-Rule" id="MF_00181"/>
    </source>
</evidence>
<reference key="1">
    <citation type="journal article" date="2009" name="Science">
        <title>The dynamics and time scale of ongoing genomic erosion in symbiotic bacteria.</title>
        <authorList>
            <person name="Moran N.A."/>
            <person name="McLaughlin H.J."/>
            <person name="Sorek R."/>
        </authorList>
    </citation>
    <scope>NUCLEOTIDE SEQUENCE [LARGE SCALE GENOMIC DNA]</scope>
    <source>
        <strain>Tuc7</strain>
    </source>
</reference>
<feature type="chain" id="PRO_1000192708" description="Probable cytosol aminopeptidase">
    <location>
        <begin position="1"/>
        <end position="499"/>
    </location>
</feature>
<feature type="active site" evidence="1">
    <location>
        <position position="279"/>
    </location>
</feature>
<feature type="active site" evidence="1">
    <location>
        <position position="353"/>
    </location>
</feature>
<feature type="binding site" evidence="1">
    <location>
        <position position="267"/>
    </location>
    <ligand>
        <name>Mn(2+)</name>
        <dbReference type="ChEBI" id="CHEBI:29035"/>
        <label>2</label>
    </ligand>
</feature>
<feature type="binding site" evidence="1">
    <location>
        <position position="272"/>
    </location>
    <ligand>
        <name>Mn(2+)</name>
        <dbReference type="ChEBI" id="CHEBI:29035"/>
        <label>1</label>
    </ligand>
</feature>
<feature type="binding site" evidence="1">
    <location>
        <position position="272"/>
    </location>
    <ligand>
        <name>Mn(2+)</name>
        <dbReference type="ChEBI" id="CHEBI:29035"/>
        <label>2</label>
    </ligand>
</feature>
<feature type="binding site" evidence="1">
    <location>
        <position position="290"/>
    </location>
    <ligand>
        <name>Mn(2+)</name>
        <dbReference type="ChEBI" id="CHEBI:29035"/>
        <label>2</label>
    </ligand>
</feature>
<feature type="binding site" evidence="1">
    <location>
        <position position="349"/>
    </location>
    <ligand>
        <name>Mn(2+)</name>
        <dbReference type="ChEBI" id="CHEBI:29035"/>
        <label>1</label>
    </ligand>
</feature>
<feature type="binding site" evidence="1">
    <location>
        <position position="351"/>
    </location>
    <ligand>
        <name>Mn(2+)</name>
        <dbReference type="ChEBI" id="CHEBI:29035"/>
        <label>1</label>
    </ligand>
</feature>
<feature type="binding site" evidence="1">
    <location>
        <position position="351"/>
    </location>
    <ligand>
        <name>Mn(2+)</name>
        <dbReference type="ChEBI" id="CHEBI:29035"/>
        <label>2</label>
    </ligand>
</feature>
<name>AMPA_BUCAT</name>
<organism>
    <name type="scientific">Buchnera aphidicola subsp. Acyrthosiphon pisum (strain Tuc7)</name>
    <dbReference type="NCBI Taxonomy" id="561501"/>
    <lineage>
        <taxon>Bacteria</taxon>
        <taxon>Pseudomonadati</taxon>
        <taxon>Pseudomonadota</taxon>
        <taxon>Gammaproteobacteria</taxon>
        <taxon>Enterobacterales</taxon>
        <taxon>Erwiniaceae</taxon>
        <taxon>Buchnera</taxon>
    </lineage>
</organism>
<keyword id="KW-0031">Aminopeptidase</keyword>
<keyword id="KW-0963">Cytoplasm</keyword>
<keyword id="KW-0378">Hydrolase</keyword>
<keyword id="KW-0464">Manganese</keyword>
<keyword id="KW-0479">Metal-binding</keyword>
<keyword id="KW-0645">Protease</keyword>
<sequence>MNFFIKSCFLDKEKTDCIVVSVFELSELSDSAIYLDKCSNGHITSLIKLGDIQGKIGDTLMLYKVPKILSKRILLVGCGKKDEINIIRFKKILKNTIHAIKKKSIKNIVYSFSNINIDNIYWMIRRMVLSLKESLYETIKINNTNIKNTNIHSITLNIIKKNDLFIAKTALKHALAIDHAITSTKNLSNLPPNICNPLYLSYKAQELSKKYENNIVVEIIDIKKMKELGMNAYIAVGNGSKNKPFMSVIKYSGNNIVNKKIIAFVGKGLTFDSGGISIKPALHMHEMKYDMCGAAAVYGTLIMAAELQLPLTVIGILSGCENMVGSHSFRPGDVLTTMSGQTVEILNTDAEGRLVLCDSLTYLERFSPDIVIDVATLTGACVTALGESVSGLFSNNEELSNQLLHASQETDDKIWSLPLFSEYHKELNSNIADFSNIGRGKAGAITAACFLSKFTKKYNWAHLDIAGTAWKSGKKSGATGRPVELLCQFLLNQSNYIYN</sequence>
<gene>
    <name evidence="1" type="primary">pepA</name>
    <name type="ordered locus">BUAPTUC7_361</name>
</gene>
<accession>B8D7Q4</accession>
<proteinExistence type="inferred from homology"/>
<comment type="function">
    <text evidence="1">Presumably involved in the processing and regular turnover of intracellular proteins. Catalyzes the removal of unsubstituted N-terminal amino acids from various peptides.</text>
</comment>
<comment type="catalytic activity">
    <reaction evidence="1">
        <text>Release of an N-terminal amino acid, Xaa-|-Yaa-, in which Xaa is preferably Leu, but may be other amino acids including Pro although not Arg or Lys, and Yaa may be Pro. Amino acid amides and methyl esters are also readily hydrolyzed, but rates on arylamides are exceedingly low.</text>
        <dbReference type="EC" id="3.4.11.1"/>
    </reaction>
</comment>
<comment type="catalytic activity">
    <reaction evidence="1">
        <text>Release of an N-terminal amino acid, preferentially leucine, but not glutamic or aspartic acids.</text>
        <dbReference type="EC" id="3.4.11.10"/>
    </reaction>
</comment>
<comment type="cofactor">
    <cofactor evidence="1">
        <name>Mn(2+)</name>
        <dbReference type="ChEBI" id="CHEBI:29035"/>
    </cofactor>
    <text evidence="1">Binds 2 manganese ions per subunit.</text>
</comment>
<comment type="subcellular location">
    <subcellularLocation>
        <location evidence="1">Cytoplasm</location>
    </subcellularLocation>
</comment>
<comment type="similarity">
    <text evidence="1">Belongs to the peptidase M17 family.</text>
</comment>
<protein>
    <recommendedName>
        <fullName evidence="1">Probable cytosol aminopeptidase</fullName>
        <ecNumber evidence="1">3.4.11.1</ecNumber>
    </recommendedName>
    <alternativeName>
        <fullName evidence="1">Leucine aminopeptidase</fullName>
        <shortName evidence="1">LAP</shortName>
        <ecNumber evidence="1">3.4.11.10</ecNumber>
    </alternativeName>
    <alternativeName>
        <fullName evidence="1">Leucyl aminopeptidase</fullName>
    </alternativeName>
</protein>
<dbReference type="EC" id="3.4.11.1" evidence="1"/>
<dbReference type="EC" id="3.4.11.10" evidence="1"/>
<dbReference type="EMBL" id="CP001158">
    <property type="protein sequence ID" value="ACL30169.1"/>
    <property type="molecule type" value="Genomic_DNA"/>
</dbReference>
<dbReference type="RefSeq" id="WP_012619522.1">
    <property type="nucleotide sequence ID" value="NC_011834.1"/>
</dbReference>
<dbReference type="SMR" id="B8D7Q4"/>
<dbReference type="MEROPS" id="M17.003"/>
<dbReference type="KEGG" id="bau:BUAPTUC7_361"/>
<dbReference type="HOGENOM" id="CLU_013734_2_2_6"/>
<dbReference type="GO" id="GO:0005737">
    <property type="term" value="C:cytoplasm"/>
    <property type="evidence" value="ECO:0007669"/>
    <property type="project" value="UniProtKB-SubCell"/>
</dbReference>
<dbReference type="GO" id="GO:0030145">
    <property type="term" value="F:manganese ion binding"/>
    <property type="evidence" value="ECO:0007669"/>
    <property type="project" value="UniProtKB-UniRule"/>
</dbReference>
<dbReference type="GO" id="GO:0070006">
    <property type="term" value="F:metalloaminopeptidase activity"/>
    <property type="evidence" value="ECO:0007669"/>
    <property type="project" value="InterPro"/>
</dbReference>
<dbReference type="GO" id="GO:0006508">
    <property type="term" value="P:proteolysis"/>
    <property type="evidence" value="ECO:0007669"/>
    <property type="project" value="UniProtKB-KW"/>
</dbReference>
<dbReference type="CDD" id="cd00433">
    <property type="entry name" value="Peptidase_M17"/>
    <property type="match status" value="1"/>
</dbReference>
<dbReference type="FunFam" id="3.40.630.10:FF:000004">
    <property type="entry name" value="Probable cytosol aminopeptidase"/>
    <property type="match status" value="1"/>
</dbReference>
<dbReference type="Gene3D" id="3.40.220.10">
    <property type="entry name" value="Leucine Aminopeptidase, subunit E, domain 1"/>
    <property type="match status" value="1"/>
</dbReference>
<dbReference type="Gene3D" id="3.40.630.10">
    <property type="entry name" value="Zn peptidases"/>
    <property type="match status" value="1"/>
</dbReference>
<dbReference type="HAMAP" id="MF_00181">
    <property type="entry name" value="Cytosol_peptidase_M17"/>
    <property type="match status" value="1"/>
</dbReference>
<dbReference type="InterPro" id="IPR011356">
    <property type="entry name" value="Leucine_aapep/pepB"/>
</dbReference>
<dbReference type="InterPro" id="IPR043472">
    <property type="entry name" value="Macro_dom-like"/>
</dbReference>
<dbReference type="InterPro" id="IPR000819">
    <property type="entry name" value="Peptidase_M17_C"/>
</dbReference>
<dbReference type="InterPro" id="IPR023042">
    <property type="entry name" value="Peptidase_M17_leu_NH2_pept"/>
</dbReference>
<dbReference type="InterPro" id="IPR008283">
    <property type="entry name" value="Peptidase_M17_N"/>
</dbReference>
<dbReference type="NCBIfam" id="NF002074">
    <property type="entry name" value="PRK00913.1-4"/>
    <property type="match status" value="1"/>
</dbReference>
<dbReference type="PANTHER" id="PTHR11963:SF23">
    <property type="entry name" value="CYTOSOL AMINOPEPTIDASE"/>
    <property type="match status" value="1"/>
</dbReference>
<dbReference type="PANTHER" id="PTHR11963">
    <property type="entry name" value="LEUCINE AMINOPEPTIDASE-RELATED"/>
    <property type="match status" value="1"/>
</dbReference>
<dbReference type="Pfam" id="PF00883">
    <property type="entry name" value="Peptidase_M17"/>
    <property type="match status" value="1"/>
</dbReference>
<dbReference type="Pfam" id="PF02789">
    <property type="entry name" value="Peptidase_M17_N"/>
    <property type="match status" value="1"/>
</dbReference>
<dbReference type="PRINTS" id="PR00481">
    <property type="entry name" value="LAMNOPPTDASE"/>
</dbReference>
<dbReference type="SUPFAM" id="SSF52949">
    <property type="entry name" value="Macro domain-like"/>
    <property type="match status" value="1"/>
</dbReference>
<dbReference type="SUPFAM" id="SSF53187">
    <property type="entry name" value="Zn-dependent exopeptidases"/>
    <property type="match status" value="1"/>
</dbReference>
<dbReference type="PROSITE" id="PS00631">
    <property type="entry name" value="CYTOSOL_AP"/>
    <property type="match status" value="1"/>
</dbReference>